<dbReference type="EC" id="3.8.1.7"/>
<dbReference type="EMBL" id="EF569604">
    <property type="protein sequence ID" value="ABQ44578.1"/>
    <property type="molecule type" value="Genomic_DNA"/>
</dbReference>
<dbReference type="PDB" id="1JXZ">
    <property type="method" value="X-ray"/>
    <property type="resolution" value="1.90 A"/>
    <property type="chains" value="A/B/C=1-269"/>
</dbReference>
<dbReference type="PDB" id="1NZY">
    <property type="method" value="X-ray"/>
    <property type="resolution" value="1.80 A"/>
    <property type="chains" value="A/B/C=1-269"/>
</dbReference>
<dbReference type="PDBsum" id="1JXZ"/>
<dbReference type="PDBsum" id="1NZY"/>
<dbReference type="SMR" id="A5JTM5"/>
<dbReference type="KEGG" id="ag:ABQ44578"/>
<dbReference type="BioCyc" id="MetaCyc:MONOMER-14753"/>
<dbReference type="BRENDA" id="3.8.1.7">
    <property type="organism ID" value="5085"/>
</dbReference>
<dbReference type="SABIO-RK" id="A5JTM5"/>
<dbReference type="UniPathway" id="UPA01011">
    <property type="reaction ID" value="UER01021"/>
</dbReference>
<dbReference type="EvolutionaryTrace" id="A5JTM5"/>
<dbReference type="GO" id="GO:0018787">
    <property type="term" value="F:4-chlorobenzoyl-CoA dehalogenase activity"/>
    <property type="evidence" value="ECO:0000314"/>
    <property type="project" value="UniProtKB"/>
</dbReference>
<dbReference type="GO" id="GO:0015936">
    <property type="term" value="P:coenzyme A metabolic process"/>
    <property type="evidence" value="ECO:0000314"/>
    <property type="project" value="UniProtKB"/>
</dbReference>
<dbReference type="CDD" id="cd06558">
    <property type="entry name" value="crotonase-like"/>
    <property type="match status" value="1"/>
</dbReference>
<dbReference type="Gene3D" id="3.90.226.10">
    <property type="entry name" value="2-enoyl-CoA Hydratase, Chain A, domain 1"/>
    <property type="match status" value="1"/>
</dbReference>
<dbReference type="Gene3D" id="1.10.12.10">
    <property type="entry name" value="Lyase 2-enoyl-coa Hydratase, Chain A, domain 2"/>
    <property type="match status" value="1"/>
</dbReference>
<dbReference type="InterPro" id="IPR029045">
    <property type="entry name" value="ClpP/crotonase-like_dom_sf"/>
</dbReference>
<dbReference type="InterPro" id="IPR051053">
    <property type="entry name" value="ECH/Chromodomain_protein"/>
</dbReference>
<dbReference type="InterPro" id="IPR018376">
    <property type="entry name" value="Enoyl-CoA_hyd/isom_CS"/>
</dbReference>
<dbReference type="InterPro" id="IPR001753">
    <property type="entry name" value="Enoyl-CoA_hydra/iso"/>
</dbReference>
<dbReference type="InterPro" id="IPR014748">
    <property type="entry name" value="Enoyl-CoA_hydra_C"/>
</dbReference>
<dbReference type="PANTHER" id="PTHR43684">
    <property type="match status" value="1"/>
</dbReference>
<dbReference type="PANTHER" id="PTHR43684:SF4">
    <property type="entry name" value="ENOYL-COA HYDRATASE_ISOMERASE FAMILY PROTEIN (AFU_ORTHOLOGUE AFUA_1G01890)"/>
    <property type="match status" value="1"/>
</dbReference>
<dbReference type="Pfam" id="PF00378">
    <property type="entry name" value="ECH_1"/>
    <property type="match status" value="1"/>
</dbReference>
<dbReference type="SUPFAM" id="SSF52096">
    <property type="entry name" value="ClpP/crotonase"/>
    <property type="match status" value="1"/>
</dbReference>
<dbReference type="PROSITE" id="PS00166">
    <property type="entry name" value="ENOYL_COA_HYDRATASE"/>
    <property type="match status" value="1"/>
</dbReference>
<feature type="chain" id="PRO_0000401147" description="4-chlorobenzoyl coenzyme A dehalogenase">
    <location>
        <begin position="1"/>
        <end position="269"/>
    </location>
</feature>
<feature type="active site" description="Proton acceptor" evidence="10 11">
    <location>
        <position position="90"/>
    </location>
</feature>
<feature type="active site" description="Nucleophile" evidence="10 11">
    <location>
        <position position="145"/>
    </location>
</feature>
<feature type="binding site" description="in other chain" evidence="10">
    <location>
        <position position="24"/>
    </location>
    <ligand>
        <name>substrate</name>
        <note>ligand shared between two oligomeric partners</note>
    </ligand>
</feature>
<feature type="binding site" description="in other chain">
    <location>
        <begin position="62"/>
        <end position="67"/>
    </location>
    <ligand>
        <name>substrate</name>
        <note>ligand shared between two oligomeric partners</note>
    </ligand>
</feature>
<feature type="binding site" description="in other chain">
    <location>
        <position position="114"/>
    </location>
    <ligand>
        <name>substrate</name>
        <note>ligand shared between two oligomeric partners</note>
    </ligand>
</feature>
<feature type="binding site">
    <location>
        <position position="257"/>
    </location>
    <ligand>
        <name>substrate</name>
        <note>ligand shared between two oligomeric partners</note>
    </ligand>
</feature>
<feature type="mutagenesis site" description="Does not strongly affect catalytic activity, but reduces substrate CoA binding." evidence="4">
    <original>R</original>
    <variation>K</variation>
    <variation>L</variation>
    <location>
        <position position="24"/>
    </location>
</feature>
<feature type="mutagenesis site" description="Forms inclusion bodies." evidence="11">
    <original>E</original>
    <variation>T</variation>
    <location>
        <position position="34"/>
    </location>
</feature>
<feature type="mutagenesis site" description="No effect on catalytic activity." evidence="11">
    <original>E</original>
    <variation>A</variation>
    <location>
        <position position="43"/>
    </location>
</feature>
<feature type="mutagenesis site" description="No effect on catalytic activity." evidence="11">
    <original>D</original>
    <variation>A</variation>
    <location>
        <position position="45"/>
    </location>
</feature>
<feature type="mutagenesis site" description="No effect on catalytic activity." evidence="11">
    <original>D</original>
    <variation>A</variation>
    <location>
        <position position="46"/>
    </location>
</feature>
<feature type="mutagenesis site" description="Yields insoluble protein." evidence="5">
    <original>G</original>
    <variation>A</variation>
    <variation>I</variation>
    <variation>P</variation>
    <location>
        <position position="63"/>
    </location>
</feature>
<feature type="mutagenesis site" description="30-fold reduction in catalytic activity, substrate benzoyl group binding is unaffected." evidence="4 5 12">
    <original>F</original>
    <variation>A</variation>
    <location>
        <position position="64"/>
    </location>
</feature>
<feature type="mutagenesis site" description="Retains catalytic activity, but substrate benzoyl group binding is decreased." evidence="4 5 12">
    <original>F</original>
    <variation>L</variation>
    <location>
        <position position="64"/>
    </location>
</feature>
<feature type="mutagenesis site" description="Severely reduces catalytic activity. Arylated intermediate does not accumulate." evidence="4 5 12">
    <original>F</original>
    <variation>P</variation>
    <location>
        <position position="64"/>
    </location>
</feature>
<feature type="mutagenesis site" description="Catalytic activity is almost as efficient as wild type." evidence="5">
    <original>Y</original>
    <variation>D</variation>
    <location>
        <position position="65"/>
    </location>
</feature>
<feature type="mutagenesis site" description="Reduces substrate CoA binding." evidence="4">
    <original>R</original>
    <variation>K</variation>
    <location>
        <position position="67"/>
    </location>
</feature>
<feature type="mutagenesis site" description="Forms inclusion bodies." evidence="4">
    <original>R</original>
    <variation>L</variation>
    <location>
        <position position="67"/>
    </location>
</feature>
<feature type="mutagenesis site" description="No effect on catalytic activity." evidence="11">
    <original>E</original>
    <variation>T</variation>
    <location>
        <position position="68"/>
    </location>
</feature>
<feature type="mutagenesis site" description="Loss of catalytic activity, substrate benzoyl group binding is not affected." evidence="11 12">
    <original>H</original>
    <variation>Q</variation>
    <location>
        <position position="81"/>
    </location>
</feature>
<feature type="mutagenesis site" description="Retains catalytic activity, but substrate benzoyl group binding is decreased." evidence="12">
    <original>F</original>
    <variation>L</variation>
    <location>
        <position position="82"/>
    </location>
</feature>
<feature type="mutagenesis site" description="Retains catalytic activity, but substrate benzoyl group binding is decreased." evidence="12">
    <original>W</original>
    <variation>F</variation>
    <location>
        <position position="89"/>
    </location>
</feature>
<feature type="mutagenesis site" description="Reduced activity and substrate benzoyl group binding." evidence="12">
    <original>W</original>
    <variation>Y</variation>
    <location>
        <position position="89"/>
    </location>
</feature>
<feature type="mutagenesis site" description="Complete loss of catalytic activity (PubMed:8718880, PubMed:9063883). Significantly reduced activity (PubMed:11695894). Substrate binding is not significantly affected. Reduced arylated intermediate formation." evidence="3 11 12">
    <original>H</original>
    <variation>Q</variation>
    <location>
        <position position="90"/>
    </location>
</feature>
<feature type="mutagenesis site" description="No effect on catalytic activity." evidence="11">
    <original>H</original>
    <variation>Q</variation>
    <location>
        <position position="94"/>
    </location>
</feature>
<feature type="mutagenesis site" description="Yields insoluble protein." evidence="5">
    <original>A</original>
    <variation>G</variation>
    <location>
        <position position="112"/>
    </location>
</feature>
<feature type="mutagenesis site" description="Protein precipitates upon purification." evidence="5">
    <original>A</original>
    <variation>S</variation>
    <location>
        <position position="112"/>
    </location>
</feature>
<feature type="mutagenesis site" description="Catalytic activity is almost as efficient as wild type." evidence="5">
    <original>A</original>
    <variation>V</variation>
    <location>
        <position position="112"/>
    </location>
</feature>
<feature type="mutagenesis site" description="Strongly reduced catalytic activity and substrate benzoyl group binding. Arylated intermediate does not accumulate." evidence="4 5">
    <original>G</original>
    <variation>A</variation>
    <location>
        <position position="113"/>
    </location>
</feature>
<feature type="mutagenesis site" description="Strongly reduced catalytic activity. Arylated intermediate does not accumulate." evidence="4 5">
    <original>G</original>
    <variation>N</variation>
    <variation>S</variation>
    <location>
        <position position="113"/>
    </location>
</feature>
<feature type="mutagenesis site" description="Protein precipitates upon purification." evidence="4 5">
    <original>G</original>
    <variation>V</variation>
    <location>
        <position position="113"/>
    </location>
</feature>
<feature type="mutagenesis site" description="Strongly reduced catalytic activity and substrate benzoyl group binding." evidence="4 12">
    <original>G</original>
    <variation>A</variation>
    <location>
        <position position="114"/>
    </location>
</feature>
<feature type="mutagenesis site" description="Unstable." evidence="4 12">
    <original>G</original>
    <variation>P</variation>
    <location>
        <position position="114"/>
    </location>
</feature>
<feature type="mutagenesis site" description="Yields insoluble protein." evidence="5">
    <original>G</original>
    <variation>L</variation>
    <variation>N</variation>
    <variation>S</variation>
    <variation>V</variation>
    <location>
        <position position="115"/>
    </location>
</feature>
<feature type="mutagenesis site" description="No effect on catalytic activity." evidence="11">
    <original>D</original>
    <variation>T</variation>
    <location>
        <position position="123"/>
    </location>
</feature>
<feature type="mutagenesis site" description="No effect on catalytic activity." evidence="11">
    <original>D</original>
    <variation>T</variation>
    <location>
        <position position="129"/>
    </location>
</feature>
<feature type="mutagenesis site" description="Low catalytic activity, but KM unaffected (PubMed:8718880). Retains catalytic activity, but substrate benzoyl group binding is decreased (PubMed:9063883)." evidence="11 12">
    <original>W</original>
    <variation>F</variation>
    <location>
        <position position="137"/>
    </location>
</feature>
<feature type="mutagenesis site" description="Complete loss of catalytic activity, but not substrate binding." evidence="12">
    <original>D</original>
    <variation>A</variation>
    <location>
        <position position="145"/>
    </location>
</feature>
<feature type="mutagenesis site" description="No effect on catalytic activity." evidence="11">
    <original>E</original>
    <variation>T</variation>
    <location>
        <position position="163"/>
    </location>
</feature>
<feature type="mutagenesis site" description="No effect on catalytic activity." evidence="11">
    <original>E</original>
    <variation>D</variation>
    <location>
        <position position="175"/>
    </location>
</feature>
<feature type="mutagenesis site" description="No effect on catalytic activity." evidence="11">
    <original>W</original>
    <variation>F</variation>
    <location>
        <position position="179"/>
    </location>
</feature>
<feature type="mutagenesis site" description="No effect on catalytic activity." evidence="11">
    <original>H</original>
    <variation>Q</variation>
    <location>
        <position position="208"/>
    </location>
</feature>
<feature type="mutagenesis site" description="Yields insoluble protein." evidence="7">
    <original>R</original>
    <variation>E</variation>
    <variation>K</variation>
    <variation>L</variation>
    <location>
        <position position="216"/>
    </location>
</feature>
<feature type="mutagenesis site" description="Yields insoluble protein." evidence="7">
    <original>E</original>
    <variation>A</variation>
    <variation>N</variation>
    <variation>Q</variation>
    <variation>R</variation>
    <location>
        <position position="232"/>
    </location>
</feature>
<feature type="mutagenesis site" description="Reduced catalytic activity, increased substrate binding." evidence="7">
    <original>E</original>
    <variation>D</variation>
    <location>
        <position position="232"/>
    </location>
</feature>
<feature type="mutagenesis site" description="Retains catalytic activity and substrate CoA binding." evidence="4">
    <original>R</original>
    <variation>K</variation>
    <location>
        <position position="257"/>
    </location>
</feature>
<feature type="mutagenesis site" description="Significantly reduces catalytic activity and substrate CoA binding." evidence="4">
    <original>R</original>
    <variation>L</variation>
    <location>
        <position position="257"/>
    </location>
</feature>
<feature type="strand" evidence="17">
    <location>
        <begin position="3"/>
        <end position="10"/>
    </location>
</feature>
<feature type="strand" evidence="17">
    <location>
        <begin position="13"/>
        <end position="18"/>
    </location>
</feature>
<feature type="helix" evidence="17">
    <location>
        <begin position="21"/>
        <end position="23"/>
    </location>
</feature>
<feature type="helix" evidence="17">
    <location>
        <begin position="29"/>
        <end position="44"/>
    </location>
</feature>
<feature type="strand" evidence="17">
    <location>
        <begin position="50"/>
        <end position="56"/>
    </location>
</feature>
<feature type="strand" evidence="17">
    <location>
        <begin position="59"/>
        <end position="61"/>
    </location>
</feature>
<feature type="helix" evidence="17">
    <location>
        <begin position="66"/>
        <end position="68"/>
    </location>
</feature>
<feature type="strand" evidence="17">
    <location>
        <begin position="71"/>
        <end position="73"/>
    </location>
</feature>
<feature type="helix" evidence="17">
    <location>
        <begin position="74"/>
        <end position="98"/>
    </location>
</feature>
<feature type="strand" evidence="17">
    <location>
        <begin position="99"/>
        <end position="101"/>
    </location>
</feature>
<feature type="strand" evidence="17">
    <location>
        <begin position="103"/>
        <end position="107"/>
    </location>
</feature>
<feature type="strand" evidence="17">
    <location>
        <begin position="109"/>
        <end position="112"/>
    </location>
</feature>
<feature type="helix" evidence="17">
    <location>
        <begin position="114"/>
        <end position="121"/>
    </location>
</feature>
<feature type="strand" evidence="17">
    <location>
        <begin position="122"/>
        <end position="128"/>
    </location>
</feature>
<feature type="strand" evidence="17">
    <location>
        <begin position="132"/>
        <end position="134"/>
    </location>
</feature>
<feature type="helix" evidence="17">
    <location>
        <begin position="137"/>
        <end position="140"/>
    </location>
</feature>
<feature type="helix" evidence="17">
    <location>
        <begin position="148"/>
        <end position="167"/>
    </location>
</feature>
<feature type="helix" evidence="17">
    <location>
        <begin position="173"/>
        <end position="178"/>
    </location>
</feature>
<feature type="strand" evidence="17">
    <location>
        <begin position="183"/>
        <end position="186"/>
    </location>
</feature>
<feature type="helix" evidence="17">
    <location>
        <begin position="188"/>
        <end position="204"/>
    </location>
</feature>
<feature type="helix" evidence="17">
    <location>
        <begin position="207"/>
        <end position="220"/>
    </location>
</feature>
<feature type="helix" evidence="17">
    <location>
        <begin position="225"/>
        <end position="241"/>
    </location>
</feature>
<feature type="helix" evidence="17">
    <location>
        <begin position="245"/>
        <end position="253"/>
    </location>
</feature>
<comment type="function">
    <text evidence="6 8">Dehalogenates 4-chlorobenzoyl-CoA, 4-iodobenzoyl-CoA and 4-bromobenzoyl-CoA, but not 4-fluorobenzoyl-CoA. Inactive towards crotonyl-CoA, alpha-methylcrotonyl-CoA and beta-methylcrotonyl-CoA.</text>
</comment>
<comment type="catalytic activity">
    <reaction evidence="6 8">
        <text>4-chlorobenzoyl-CoA + H2O = 4-hydroxybenzoyl-CoA + chloride + H(+)</text>
        <dbReference type="Rhea" id="RHEA:14853"/>
        <dbReference type="ChEBI" id="CHEBI:15377"/>
        <dbReference type="ChEBI" id="CHEBI:15378"/>
        <dbReference type="ChEBI" id="CHEBI:17996"/>
        <dbReference type="ChEBI" id="CHEBI:57354"/>
        <dbReference type="ChEBI" id="CHEBI:57356"/>
        <dbReference type="EC" id="3.8.1.7"/>
    </reaction>
</comment>
<comment type="activity regulation">
    <text evidence="6 8 11">Inactivated by 1 mM Ag(+) and by 5 mM Cu(2+). Partially inhibited by 5 mM Zn(2+), Mn(2+), Co(2+), Fe(2+) and Ni(2+). Unaffected by 10 mM Na(+), K(+) and Li(+) and by 0.5 mM Mg(2+), Mn(2+), Fe(2+), Ca(2+), Co(2+) and Zn(2+). Inhibited by the sulfhydryl blocking agent 5,5'-dithio-bis-(2-nitrobenzoate), SDS and N-bromosuccinimide. Unaffected by sodium azide and EDTA. Inactivated following treatment with diethyl pyrocarbonate; this inactivation is reversible by treatment with hydroxylamine.</text>
</comment>
<comment type="biophysicochemical properties">
    <kinetics>
        <KM evidence="3 4 5 6 7 8 9 12">3.7 uM for 4-chlorobenzoyl-CoA</KM>
        <KM evidence="3 4 5 6 7 8 9 12">4.2 uM for 4-bromobenzoyl-CoA</KM>
        <KM evidence="3 4 5 6 7 8 9 12">6.5 uM for 4-iodobenzoyl-CoA</KM>
        <KM evidence="3 4 5 6 7 8 9 12">10.4 uM for 2,4-dichlorobenzoyl-CoA</KM>
        <KM evidence="3 4 5 6 7 8 9 12">42 uM for 3,4-dichlorobenzoyl-CoA</KM>
        <KM evidence="3 4 5 6 7 8 9 12">30 uM for 4-chloro-2-nitrobenzoyl-CoA</KM>
        <KM evidence="3 4 5 6 7 8 9 12">5.5 uM for 4-chloro-3-nitrobenzoyl-CoA</KM>
        <Vmax evidence="3 4 5 6 7 8 9 12">2.2 umol/min/mg enzyme with 4-chlorobenzoyl-CoA as substrate</Vmax>
    </kinetics>
    <phDependence>
        <text evidence="3 4 5 6 7 8 9 12">Optimum pH is 10.0. Half maximum activity remains at pH 9.0 and 11.5. Stable from pH 6.5 to 11.0, activity is lost following 10 minutes incubation at pH 4.5 or 12.0.</text>
    </phDependence>
    <temperatureDependence>
        <text evidence="3 4 5 6 7 8 9 12">Optimum temperature is 60 degrees Celsius. Retains 60% of maximum activity at 30 degrees Celsius and 65 degrees Celsius. After 15 minutes preincubation at 60 degrees Celsius 70% of the initial activity remains, 15 minutes preincubation at 65 degrees Celsius results in a total loss of activity.</text>
    </temperatureDependence>
</comment>
<comment type="pathway">
    <text evidence="6">Xenobiotic degradation; 4-chlorobenzoate degradation; 4-hydroxybenzoate from 4-chlorobenzoate: step 2/3.</text>
</comment>
<comment type="subunit">
    <text evidence="3 6 8 10">Homotetramer (PubMed:1610806). Homotetramer, homooctamer and larger multimers (PubMed:7579994). Homotrimer (PubMed:8679561).</text>
</comment>
<comment type="induction">
    <text evidence="8">By 4-chlorobenzoyl-CoA, 4-iodobenzoyl-CoA or 4-bromobenzoyl-CoA.</text>
</comment>
<comment type="similarity">
    <text evidence="2">Belongs to the enoyl-CoA hydratase/isomerase family.</text>
</comment>
<evidence type="ECO:0000250" key="1">
    <source>
        <dbReference type="UniProtKB" id="O85078"/>
    </source>
</evidence>
<evidence type="ECO:0000255" key="2"/>
<evidence type="ECO:0000269" key="3">
    <source>
    </source>
</evidence>
<evidence type="ECO:0000269" key="4">
    <source>
    </source>
</evidence>
<evidence type="ECO:0000269" key="5">
    <source>
    </source>
</evidence>
<evidence type="ECO:0000269" key="6">
    <source>
    </source>
</evidence>
<evidence type="ECO:0000269" key="7">
    <source>
    </source>
</evidence>
<evidence type="ECO:0000269" key="8">
    <source>
    </source>
</evidence>
<evidence type="ECO:0000269" key="9">
    <source>
    </source>
</evidence>
<evidence type="ECO:0000269" key="10">
    <source>
    </source>
</evidence>
<evidence type="ECO:0000269" key="11">
    <source>
    </source>
</evidence>
<evidence type="ECO:0000269" key="12">
    <source>
    </source>
</evidence>
<evidence type="ECO:0000303" key="13">
    <source>
    </source>
</evidence>
<evidence type="ECO:0000303" key="14">
    <source>
    </source>
</evidence>
<evidence type="ECO:0000305" key="15"/>
<evidence type="ECO:0000312" key="16">
    <source>
        <dbReference type="EMBL" id="ABQ44578.1"/>
    </source>
</evidence>
<evidence type="ECO:0007829" key="17">
    <source>
        <dbReference type="PDB" id="1NZY"/>
    </source>
</evidence>
<proteinExistence type="evidence at protein level"/>
<protein>
    <recommendedName>
        <fullName evidence="14">4-chlorobenzoyl coenzyme A dehalogenase</fullName>
        <shortName evidence="16">4-CBA-CoA dehalogenase</shortName>
        <shortName evidence="1">4-CBCoA dehalogenase</shortName>
        <shortName evidence="13 14">4-chlorobenzoyl-CoA dehalogenase</shortName>
        <ecNumber>3.8.1.7</ecNumber>
    </recommendedName>
</protein>
<keyword id="KW-0002">3D-structure</keyword>
<keyword id="KW-0903">Direct protein sequencing</keyword>
<keyword id="KW-0378">Hydrolase</keyword>
<sequence length="269" mass="29802">MYEAIGHRVEDGVAEITIKLPRHRNALSVKAMQEVTDALNRAEEDDSVGAVMITGAEDAFCAGFYLREIPLDKGVAGVRDHFRIGALWWHQMIHKIIRVKRPVLAAINGVAAGGGLGISLASDMAICADSAKFVCAWHTIGIGNDTATSYSLARIVGMRRAMELMLTNRTLYPEEAKDWGLVSRVYPKDDFREVAWKVARELAAAPTHLQVMAKERFHAGWMQPVEECTEFEIQNVIASVTHPHFMPCLTEFLDGHRADRPQVELPAGV</sequence>
<name>CBADH_PSEUC</name>
<organism>
    <name type="scientific">Pseudomonas sp. (strain CBS-3)</name>
    <dbReference type="NCBI Taxonomy" id="72586"/>
    <lineage>
        <taxon>Bacteria</taxon>
        <taxon>Pseudomonadati</taxon>
        <taxon>Pseudomonadota</taxon>
    </lineage>
</organism>
<reference evidence="15" key="1">
    <citation type="journal article" date="1992" name="Biochemistry">
        <title>Ancestry of the 4-chlorobenzoate dehalogenase: analysis of amino acid sequence identities among families of acyl:adenyl ligases, enoyl-CoA hydratases/isomerases, and acyl-CoA thioesterases.</title>
        <authorList>
            <person name="Babbitt P.C."/>
            <person name="Kenyon G.L."/>
            <person name="Martin B.M."/>
            <person name="Charest H."/>
            <person name="Slyvestre M."/>
            <person name="Scholten J.D."/>
            <person name="Chang K.H."/>
            <person name="Liang P.H."/>
            <person name="Dunaway-Mariano D."/>
        </authorList>
    </citation>
    <scope>NUCLEOTIDE SEQUENCE [GENOMIC DNA]</scope>
</reference>
<reference evidence="16" key="2">
    <citation type="submission" date="2007-04" db="EMBL/GenBank/DDBJ databases">
        <title>The nucleotide sequence upstream and downstream of 4-CBA-CoA ORFs in 9.5 kb Pseudomonas sp. strain CBS 3 chromosomal DNA.</title>
        <authorList>
            <person name="Zhang W."/>
            <person name="Dunaway-Mariano D."/>
        </authorList>
    </citation>
    <scope>NUCLEOTIDE SEQUENCE [GENOMIC DNA]</scope>
    <source>
        <strain>CBS-3</strain>
    </source>
</reference>
<reference evidence="15" key="3">
    <citation type="journal article" date="1995" name="Biodegradation">
        <title>Dehalogenation of 4-chlorobenzoate. Characterisation of 4-chlorobenzoyl-coenzyme A dehalogenase from Pseudomonas sp. CBS3.</title>
        <authorList>
            <person name="Loffler F."/>
            <person name="Lingens F."/>
            <person name="Muller R."/>
        </authorList>
    </citation>
    <scope>PROTEIN SEQUENCE OF 1-40</scope>
    <scope>FUNCTION</scope>
    <scope>CATALYTIC ACTIVITY</scope>
    <scope>ACTIVITY REGULATION</scope>
    <scope>BIOPHYSICOCHEMICAL PROPERTIES</scope>
    <scope>SUBUNIT</scope>
    <scope>INDUCTION</scope>
    <source>
        <strain>CBS-3</strain>
    </source>
</reference>
<reference evidence="15" key="4">
    <citation type="journal article" date="1992" name="Biochemistry">
        <title>Isolation and characterization of the three polypeptide components of 4-chlorobenzoate dehalogenase from Pseudomonas sp. strain CBS-3.</title>
        <authorList>
            <person name="Chang K.H."/>
            <person name="Liang P.H."/>
            <person name="Beck W."/>
            <person name="Scholten J.D."/>
            <person name="Dunaway-Mariano D."/>
        </authorList>
    </citation>
    <scope>FUNCTION</scope>
    <scope>CATALYTIC ACTIVITY</scope>
    <scope>ACTIVITY REGULATION</scope>
    <scope>BIOPHYSICOCHEMICAL PROPERTIES</scope>
    <scope>PATHWAY</scope>
    <scope>SUBUNIT</scope>
    <source>
        <strain>CBS-3</strain>
    </source>
</reference>
<reference evidence="15" key="5">
    <citation type="journal article" date="1993" name="Biochemistry">
        <title>Specificity of 4-chlorobenzoyl coenzyme A dehalogenase catalyzed dehalogenation of halogenated aromatics.</title>
        <authorList>
            <person name="Liang P.H."/>
            <person name="Yang G."/>
            <person name="Dunaway-Mariano D."/>
        </authorList>
    </citation>
    <scope>BIOPHYSICOCHEMICAL PROPERTIES</scope>
</reference>
<reference evidence="15" key="6">
    <citation type="journal article" date="1996" name="Biochemistry">
        <title>Identification of active site residues essential to 4-chlorobenzoyl-coenzyme A dehalogenase catalysis by chemical modification and site directed mutagenesis.</title>
        <authorList>
            <person name="Yang G."/>
            <person name="Liu R.Q."/>
            <person name="Taylor K.L."/>
            <person name="Xiang H."/>
            <person name="Price J."/>
            <person name="Dunaway-Mariano D."/>
        </authorList>
    </citation>
    <scope>ACTIVITY REGULATION</scope>
    <scope>ACTIVE SITES</scope>
    <scope>MUTAGENESIS OF GLU-34; GLU-43; ASP-45; ASP-46; GLU-68; HIS-90; HIS-94; ASP-123; ASP-129; TRP-137; GLU-163; GLU-175; TRP-179 AND HIS-208</scope>
</reference>
<reference evidence="15" key="7">
    <citation type="journal article" date="1997" name="Biochemistry">
        <title>Investigation of substrate activation by 4-chlorobenzoyl-coenzyme A dehalogenase.</title>
        <authorList>
            <person name="Taylor K.L."/>
            <person name="Xiang H."/>
            <person name="Liu R.Q."/>
            <person name="Yang G."/>
            <person name="Dunaway-Mariano D."/>
        </authorList>
    </citation>
    <scope>BIOPHYSICOCHEMICAL PROPERTIES</scope>
    <scope>MUTAGENESIS OF PHE-64; HIS-81; PHE-82; TRP-89; HIS-90; GLY-114; TRP-137 AND ASP-145</scope>
</reference>
<reference evidence="15" key="8">
    <citation type="journal article" date="2001" name="Biochemistry">
        <title>Role of active site binding interactions in 4-chlorobenzoyl-coenzyme A dehalogenase catalysis.</title>
        <authorList>
            <person name="Luo L."/>
            <person name="Taylor K.L."/>
            <person name="Xiang H."/>
            <person name="Wei Y."/>
            <person name="Zhang W."/>
            <person name="Dunaway-Mariano D."/>
        </authorList>
    </citation>
    <scope>BIOPHYSICOCHEMICAL PROPERTIES</scope>
    <scope>MUTAGENESIS OF ARG-24; PHE-64; ARG-67; GLY-113; GLY-114 AND ARG-257</scope>
</reference>
<reference evidence="15" key="9">
    <citation type="journal article" date="2003" name="Biochemistry">
        <title>The strength of dehalogenase-substrate hydrogen bonding correlates with the rate of Meisenheimer intermediate formation.</title>
        <authorList>
            <person name="Dong J."/>
            <person name="Lu X."/>
            <person name="Wei Y."/>
            <person name="Luo L."/>
            <person name="Dunaway-Mariano D."/>
            <person name="Carey P.R."/>
        </authorList>
    </citation>
    <scope>BIOPHYSICOCHEMICAL PROPERTIES</scope>
    <scope>MUTAGENESIS OF GLY-63; PHE-64; TYR-65; ALA-112; GLY-113 AND GLY-115</scope>
</reference>
<reference evidence="15" key="10">
    <citation type="journal article" date="2006" name="Biochemistry">
        <title>Contributions of long-range electrostatic interactions to 4-chlorobenzoyl-CoA dehalogenase catalysis: a combined theoretical and experimental study.</title>
        <authorList>
            <person name="Wu J."/>
            <person name="Xu D."/>
            <person name="Lu X."/>
            <person name="Wang C."/>
            <person name="Guo H."/>
            <person name="Dunaway-Mariano D."/>
        </authorList>
    </citation>
    <scope>BIOPHYSICOCHEMICAL PROPERTIES</scope>
    <scope>MUTAGENESIS OF ARG-216 AND GLU-232</scope>
</reference>
<reference evidence="15" key="11">
    <citation type="journal article" date="1996" name="Biochemistry">
        <title>Structure of 4-chlorobenzoyl coenzyme A dehalogenase determined to 1.8 A resolution: an enzyme catalyst generated via adaptive mutation.</title>
        <authorList>
            <person name="Benning M.M."/>
            <person name="Taylor K.L."/>
            <person name="Liu R.-Q."/>
            <person name="Yang G."/>
            <person name="Xiang H."/>
            <person name="Wesenberg G."/>
            <person name="Dunaway-Mariano D."/>
            <person name="Holden H.M."/>
        </authorList>
    </citation>
    <scope>X-RAY CRYSTALLOGRAPHY (1.80 ANGSTROMS) OF MUTANT GLN-90 IN COMPLEX WITH 4-HYDROXYBENZOYL COENZYME A</scope>
    <scope>SUBUNIT</scope>
    <scope>ACTIVE SITE</scope>
    <scope>SUBSTRATE-BINDING SITES</scope>
    <source>
        <strain>CBS-3</strain>
    </source>
</reference>
<reference evidence="15" key="12">
    <citation type="journal article" date="2001" name="Biochemistry">
        <title>Histidine 90 function in 4-chlorobenzoyl-coenzyme a dehalogenase catalysis.</title>
        <authorList>
            <person name="Zhang W."/>
            <person name="Wei Y."/>
            <person name="Luo L."/>
            <person name="Taylor K.L."/>
            <person name="Yang G."/>
            <person name="Dunaway-Mariano D."/>
            <person name="Benning M.M."/>
            <person name="Holden H.M."/>
        </authorList>
    </citation>
    <scope>X-RAY CRYSTALLOGRAPHY (1.90 ANGSTROMS) OF MUTANT GLN-90 IN COMPLEX WITH 4-HYDROXYBENZOYL COENZYME A</scope>
    <scope>BIOPHYSICOCHEMICAL PROPERTIES</scope>
    <scope>MUTAGENESIS OF HIS-90</scope>
</reference>
<accession>A5JTM5</accession>